<protein>
    <recommendedName>
        <fullName evidence="1">Small ribosomal subunit protein uS7</fullName>
    </recommendedName>
    <alternativeName>
        <fullName evidence="2">30S ribosomal protein S7</fullName>
    </alternativeName>
</protein>
<sequence length="157" mass="17745">MSRRHAAEKKIIPADPIYGSVTLERFINKVMMHGKKSIARKIVYNALERFAKKVGAENVLEAFEEALENAKPLLEVRSRRVGGATYQVPVEVAAGRRDCLAMQWIIKFARAKPGKSMEVGLATELVDCFNKQGATIKKREDTHRMAEANKAFAHYKW</sequence>
<comment type="function">
    <text evidence="1">One of the primary rRNA binding proteins, it binds directly to 16S rRNA where it nucleates assembly of the head domain of the 30S subunit. Is located at the subunit interface close to the decoding center, probably blocks exit of the E-site tRNA.</text>
</comment>
<comment type="subunit">
    <text evidence="1">Part of the 30S ribosomal subunit. Contacts proteins S9 and S11.</text>
</comment>
<comment type="similarity">
    <text evidence="1">Belongs to the universal ribosomal protein uS7 family.</text>
</comment>
<feature type="chain" id="PRO_0000226491" description="Small ribosomal subunit protein uS7">
    <location>
        <begin position="1"/>
        <end position="157"/>
    </location>
</feature>
<proteinExistence type="inferred from homology"/>
<dbReference type="EMBL" id="CR848038">
    <property type="protein sequence ID" value="CAH63645.1"/>
    <property type="molecule type" value="Genomic_DNA"/>
</dbReference>
<dbReference type="RefSeq" id="WP_006343853.1">
    <property type="nucleotide sequence ID" value="NC_004552.2"/>
</dbReference>
<dbReference type="SMR" id="Q5L6S6"/>
<dbReference type="GeneID" id="93024743"/>
<dbReference type="KEGG" id="cab:CAB187"/>
<dbReference type="eggNOG" id="COG0049">
    <property type="taxonomic scope" value="Bacteria"/>
</dbReference>
<dbReference type="HOGENOM" id="CLU_072226_1_1_0"/>
<dbReference type="OrthoDB" id="9807653at2"/>
<dbReference type="Proteomes" id="UP000001012">
    <property type="component" value="Chromosome"/>
</dbReference>
<dbReference type="GO" id="GO:0015935">
    <property type="term" value="C:small ribosomal subunit"/>
    <property type="evidence" value="ECO:0007669"/>
    <property type="project" value="InterPro"/>
</dbReference>
<dbReference type="GO" id="GO:0019843">
    <property type="term" value="F:rRNA binding"/>
    <property type="evidence" value="ECO:0007669"/>
    <property type="project" value="UniProtKB-UniRule"/>
</dbReference>
<dbReference type="GO" id="GO:0003735">
    <property type="term" value="F:structural constituent of ribosome"/>
    <property type="evidence" value="ECO:0007669"/>
    <property type="project" value="InterPro"/>
</dbReference>
<dbReference type="GO" id="GO:0000049">
    <property type="term" value="F:tRNA binding"/>
    <property type="evidence" value="ECO:0007669"/>
    <property type="project" value="UniProtKB-UniRule"/>
</dbReference>
<dbReference type="GO" id="GO:0006412">
    <property type="term" value="P:translation"/>
    <property type="evidence" value="ECO:0007669"/>
    <property type="project" value="UniProtKB-UniRule"/>
</dbReference>
<dbReference type="CDD" id="cd14869">
    <property type="entry name" value="uS7_Bacteria"/>
    <property type="match status" value="1"/>
</dbReference>
<dbReference type="FunFam" id="1.10.455.10:FF:000001">
    <property type="entry name" value="30S ribosomal protein S7"/>
    <property type="match status" value="1"/>
</dbReference>
<dbReference type="Gene3D" id="1.10.455.10">
    <property type="entry name" value="Ribosomal protein S7 domain"/>
    <property type="match status" value="1"/>
</dbReference>
<dbReference type="HAMAP" id="MF_00480_B">
    <property type="entry name" value="Ribosomal_uS7_B"/>
    <property type="match status" value="1"/>
</dbReference>
<dbReference type="InterPro" id="IPR000235">
    <property type="entry name" value="Ribosomal_uS7"/>
</dbReference>
<dbReference type="InterPro" id="IPR005717">
    <property type="entry name" value="Ribosomal_uS7_bac/org-type"/>
</dbReference>
<dbReference type="InterPro" id="IPR020606">
    <property type="entry name" value="Ribosomal_uS7_CS"/>
</dbReference>
<dbReference type="InterPro" id="IPR023798">
    <property type="entry name" value="Ribosomal_uS7_dom"/>
</dbReference>
<dbReference type="InterPro" id="IPR036823">
    <property type="entry name" value="Ribosomal_uS7_dom_sf"/>
</dbReference>
<dbReference type="NCBIfam" id="TIGR01029">
    <property type="entry name" value="rpsG_bact"/>
    <property type="match status" value="1"/>
</dbReference>
<dbReference type="PANTHER" id="PTHR11205">
    <property type="entry name" value="RIBOSOMAL PROTEIN S7"/>
    <property type="match status" value="1"/>
</dbReference>
<dbReference type="Pfam" id="PF00177">
    <property type="entry name" value="Ribosomal_S7"/>
    <property type="match status" value="1"/>
</dbReference>
<dbReference type="PIRSF" id="PIRSF002122">
    <property type="entry name" value="RPS7p_RPS7a_RPS5e_RPS7o"/>
    <property type="match status" value="1"/>
</dbReference>
<dbReference type="SUPFAM" id="SSF47973">
    <property type="entry name" value="Ribosomal protein S7"/>
    <property type="match status" value="1"/>
</dbReference>
<dbReference type="PROSITE" id="PS00052">
    <property type="entry name" value="RIBOSOMAL_S7"/>
    <property type="match status" value="1"/>
</dbReference>
<reference key="1">
    <citation type="journal article" date="2005" name="Genome Res.">
        <title>The Chlamydophila abortus genome sequence reveals an array of variable proteins that contribute to interspecies variation.</title>
        <authorList>
            <person name="Thomson N.R."/>
            <person name="Yeats C."/>
            <person name="Bell K."/>
            <person name="Holden M.T.G."/>
            <person name="Bentley S.D."/>
            <person name="Livingstone M."/>
            <person name="Cerdeno-Tarraga A.-M."/>
            <person name="Harris B."/>
            <person name="Doggett J."/>
            <person name="Ormond D."/>
            <person name="Mungall K."/>
            <person name="Clarke K."/>
            <person name="Feltwell T."/>
            <person name="Hance Z."/>
            <person name="Sanders M."/>
            <person name="Quail M.A."/>
            <person name="Price C."/>
            <person name="Barrell B.G."/>
            <person name="Parkhill J."/>
            <person name="Longbottom D."/>
        </authorList>
    </citation>
    <scope>NUCLEOTIDE SEQUENCE [LARGE SCALE GENOMIC DNA]</scope>
    <source>
        <strain>DSM 27085 / S26/3</strain>
    </source>
</reference>
<evidence type="ECO:0000255" key="1">
    <source>
        <dbReference type="HAMAP-Rule" id="MF_00480"/>
    </source>
</evidence>
<evidence type="ECO:0000305" key="2"/>
<accession>Q5L6S6</accession>
<name>RS7_CHLAB</name>
<organism>
    <name type="scientific">Chlamydia abortus (strain DSM 27085 / S26/3)</name>
    <name type="common">Chlamydophila abortus</name>
    <dbReference type="NCBI Taxonomy" id="218497"/>
    <lineage>
        <taxon>Bacteria</taxon>
        <taxon>Pseudomonadati</taxon>
        <taxon>Chlamydiota</taxon>
        <taxon>Chlamydiia</taxon>
        <taxon>Chlamydiales</taxon>
        <taxon>Chlamydiaceae</taxon>
        <taxon>Chlamydia/Chlamydophila group</taxon>
        <taxon>Chlamydia</taxon>
    </lineage>
</organism>
<gene>
    <name evidence="1" type="primary">rpsG</name>
    <name type="ordered locus">CAB187</name>
</gene>
<keyword id="KW-0687">Ribonucleoprotein</keyword>
<keyword id="KW-0689">Ribosomal protein</keyword>
<keyword id="KW-0694">RNA-binding</keyword>
<keyword id="KW-0699">rRNA-binding</keyword>
<keyword id="KW-0820">tRNA-binding</keyword>